<evidence type="ECO:0000255" key="1">
    <source>
        <dbReference type="HAMAP-Rule" id="MF_00333"/>
    </source>
</evidence>
<keyword id="KW-0963">Cytoplasm</keyword>
<keyword id="KW-0350">Heme biosynthesis</keyword>
<keyword id="KW-0479">Metal-binding</keyword>
<keyword id="KW-0560">Oxidoreductase</keyword>
<keyword id="KW-0627">Porphyrin biosynthesis</keyword>
<sequence>MNSPDIALIKTYLLTLQDNICAALAQADGHAEFTEECWVREEGGGGRSRVLVNGAVFEQAGVNFSHVSGAMLPASATAHRPELAGRSFQALGVSLVIHPLNPYLPTSHANVRFFIAEKPGEDAVWWFGGGFDLTPYYGFEEDAIHWHQVAHSLCQPFGEQIYPRYKKWCDDYFYIKHRQEARGIGGLFFDDLNSPDFMTCFNFTQAVGDGFLAAYMPIVARRKALGWGDRERQFQLYRRGRYVEFNLVWDRGTLFGLQTGGRTESILMSLPPLVRWEYNYQPEADSAEAALYRDFLPVKDWLAIKGETH</sequence>
<accession>B2K962</accession>
<comment type="function">
    <text evidence="1">Involved in the heme biosynthesis. Catalyzes the aerobic oxidative decarboxylation of propionate groups of rings A and B of coproporphyrinogen-III to yield the vinyl groups in protoporphyrinogen-IX.</text>
</comment>
<comment type="catalytic activity">
    <reaction evidence="1">
        <text>coproporphyrinogen III + O2 + 2 H(+) = protoporphyrinogen IX + 2 CO2 + 2 H2O</text>
        <dbReference type="Rhea" id="RHEA:18257"/>
        <dbReference type="ChEBI" id="CHEBI:15377"/>
        <dbReference type="ChEBI" id="CHEBI:15378"/>
        <dbReference type="ChEBI" id="CHEBI:15379"/>
        <dbReference type="ChEBI" id="CHEBI:16526"/>
        <dbReference type="ChEBI" id="CHEBI:57307"/>
        <dbReference type="ChEBI" id="CHEBI:57309"/>
        <dbReference type="EC" id="1.3.3.3"/>
    </reaction>
</comment>
<comment type="cofactor">
    <cofactor evidence="1">
        <name>a divalent metal cation</name>
        <dbReference type="ChEBI" id="CHEBI:60240"/>
    </cofactor>
</comment>
<comment type="pathway">
    <text evidence="1">Porphyrin-containing compound metabolism; protoporphyrin-IX biosynthesis; protoporphyrinogen-IX from coproporphyrinogen-III (O2 route): step 1/1.</text>
</comment>
<comment type="subunit">
    <text evidence="1">Homodimer.</text>
</comment>
<comment type="subcellular location">
    <subcellularLocation>
        <location evidence="1">Cytoplasm</location>
    </subcellularLocation>
</comment>
<comment type="similarity">
    <text evidence="1">Belongs to the aerobic coproporphyrinogen-III oxidase family.</text>
</comment>
<organism>
    <name type="scientific">Yersinia pseudotuberculosis serotype IB (strain PB1/+)</name>
    <dbReference type="NCBI Taxonomy" id="502801"/>
    <lineage>
        <taxon>Bacteria</taxon>
        <taxon>Pseudomonadati</taxon>
        <taxon>Pseudomonadota</taxon>
        <taxon>Gammaproteobacteria</taxon>
        <taxon>Enterobacterales</taxon>
        <taxon>Yersiniaceae</taxon>
        <taxon>Yersinia</taxon>
    </lineage>
</organism>
<gene>
    <name evidence="1" type="primary">hemF</name>
    <name type="ordered locus">YPTS_2856</name>
</gene>
<reference key="1">
    <citation type="submission" date="2008-04" db="EMBL/GenBank/DDBJ databases">
        <title>Complete sequence of Yersinia pseudotuberculosis PB1/+.</title>
        <authorList>
            <person name="Copeland A."/>
            <person name="Lucas S."/>
            <person name="Lapidus A."/>
            <person name="Glavina del Rio T."/>
            <person name="Dalin E."/>
            <person name="Tice H."/>
            <person name="Bruce D."/>
            <person name="Goodwin L."/>
            <person name="Pitluck S."/>
            <person name="Munk A.C."/>
            <person name="Brettin T."/>
            <person name="Detter J.C."/>
            <person name="Han C."/>
            <person name="Tapia R."/>
            <person name="Schmutz J."/>
            <person name="Larimer F."/>
            <person name="Land M."/>
            <person name="Hauser L."/>
            <person name="Challacombe J.F."/>
            <person name="Green L."/>
            <person name="Lindler L.E."/>
            <person name="Nikolich M.P."/>
            <person name="Richardson P."/>
        </authorList>
    </citation>
    <scope>NUCLEOTIDE SEQUENCE [LARGE SCALE GENOMIC DNA]</scope>
    <source>
        <strain>PB1/+</strain>
    </source>
</reference>
<proteinExistence type="inferred from homology"/>
<feature type="chain" id="PRO_1000119836" description="Oxygen-dependent coproporphyrinogen-III oxidase">
    <location>
        <begin position="1"/>
        <end position="309"/>
    </location>
</feature>
<feature type="region of interest" description="Important for dimerization" evidence="1">
    <location>
        <begin position="242"/>
        <end position="277"/>
    </location>
</feature>
<feature type="active site" description="Proton donor" evidence="1">
    <location>
        <position position="108"/>
    </location>
</feature>
<feature type="binding site" evidence="1">
    <location>
        <position position="94"/>
    </location>
    <ligand>
        <name>substrate</name>
    </ligand>
</feature>
<feature type="binding site" evidence="1">
    <location>
        <position position="98"/>
    </location>
    <ligand>
        <name>a divalent metal cation</name>
        <dbReference type="ChEBI" id="CHEBI:60240"/>
    </ligand>
</feature>
<feature type="binding site" evidence="1">
    <location>
        <position position="108"/>
    </location>
    <ligand>
        <name>a divalent metal cation</name>
        <dbReference type="ChEBI" id="CHEBI:60240"/>
    </ligand>
</feature>
<feature type="binding site" evidence="1">
    <location>
        <begin position="110"/>
        <end position="112"/>
    </location>
    <ligand>
        <name>substrate</name>
    </ligand>
</feature>
<feature type="binding site" evidence="1">
    <location>
        <position position="147"/>
    </location>
    <ligand>
        <name>a divalent metal cation</name>
        <dbReference type="ChEBI" id="CHEBI:60240"/>
    </ligand>
</feature>
<feature type="binding site" evidence="1">
    <location>
        <position position="177"/>
    </location>
    <ligand>
        <name>a divalent metal cation</name>
        <dbReference type="ChEBI" id="CHEBI:60240"/>
    </ligand>
</feature>
<feature type="binding site" evidence="1">
    <location>
        <begin position="260"/>
        <end position="262"/>
    </location>
    <ligand>
        <name>substrate</name>
    </ligand>
</feature>
<feature type="site" description="Important for dimerization" evidence="1">
    <location>
        <position position="177"/>
    </location>
</feature>
<dbReference type="EC" id="1.3.3.3" evidence="1"/>
<dbReference type="EMBL" id="CP001048">
    <property type="protein sequence ID" value="ACC89813.1"/>
    <property type="molecule type" value="Genomic_DNA"/>
</dbReference>
<dbReference type="RefSeq" id="WP_002208526.1">
    <property type="nucleotide sequence ID" value="NZ_CP009780.1"/>
</dbReference>
<dbReference type="SMR" id="B2K962"/>
<dbReference type="GeneID" id="57975670"/>
<dbReference type="KEGG" id="ypb:YPTS_2856"/>
<dbReference type="PATRIC" id="fig|502801.10.peg.2284"/>
<dbReference type="UniPathway" id="UPA00251">
    <property type="reaction ID" value="UER00322"/>
</dbReference>
<dbReference type="GO" id="GO:0005737">
    <property type="term" value="C:cytoplasm"/>
    <property type="evidence" value="ECO:0007669"/>
    <property type="project" value="UniProtKB-SubCell"/>
</dbReference>
<dbReference type="GO" id="GO:0004109">
    <property type="term" value="F:coproporphyrinogen oxidase activity"/>
    <property type="evidence" value="ECO:0007669"/>
    <property type="project" value="UniProtKB-UniRule"/>
</dbReference>
<dbReference type="GO" id="GO:0046872">
    <property type="term" value="F:metal ion binding"/>
    <property type="evidence" value="ECO:0007669"/>
    <property type="project" value="UniProtKB-KW"/>
</dbReference>
<dbReference type="GO" id="GO:0042803">
    <property type="term" value="F:protein homodimerization activity"/>
    <property type="evidence" value="ECO:0000250"/>
    <property type="project" value="UniProtKB"/>
</dbReference>
<dbReference type="GO" id="GO:0006782">
    <property type="term" value="P:protoporphyrinogen IX biosynthetic process"/>
    <property type="evidence" value="ECO:0007669"/>
    <property type="project" value="UniProtKB-UniRule"/>
</dbReference>
<dbReference type="FunFam" id="3.40.1500.10:FF:000001">
    <property type="entry name" value="Oxygen-dependent coproporphyrinogen-III oxidase"/>
    <property type="match status" value="1"/>
</dbReference>
<dbReference type="Gene3D" id="3.40.1500.10">
    <property type="entry name" value="Coproporphyrinogen III oxidase, aerobic"/>
    <property type="match status" value="1"/>
</dbReference>
<dbReference type="HAMAP" id="MF_00333">
    <property type="entry name" value="Coprogen_oxidas"/>
    <property type="match status" value="1"/>
</dbReference>
<dbReference type="InterPro" id="IPR001260">
    <property type="entry name" value="Coprogen_oxidase_aer"/>
</dbReference>
<dbReference type="InterPro" id="IPR036406">
    <property type="entry name" value="Coprogen_oxidase_aer_sf"/>
</dbReference>
<dbReference type="InterPro" id="IPR018375">
    <property type="entry name" value="Coprogen_oxidase_CS"/>
</dbReference>
<dbReference type="NCBIfam" id="NF003727">
    <property type="entry name" value="PRK05330.1"/>
    <property type="match status" value="1"/>
</dbReference>
<dbReference type="PANTHER" id="PTHR10755">
    <property type="entry name" value="COPROPORPHYRINOGEN III OXIDASE, MITOCHONDRIAL"/>
    <property type="match status" value="1"/>
</dbReference>
<dbReference type="PANTHER" id="PTHR10755:SF0">
    <property type="entry name" value="OXYGEN-DEPENDENT COPROPORPHYRINOGEN-III OXIDASE, MITOCHONDRIAL"/>
    <property type="match status" value="1"/>
</dbReference>
<dbReference type="Pfam" id="PF01218">
    <property type="entry name" value="Coprogen_oxidas"/>
    <property type="match status" value="1"/>
</dbReference>
<dbReference type="PIRSF" id="PIRSF000166">
    <property type="entry name" value="Coproporphyri_ox"/>
    <property type="match status" value="1"/>
</dbReference>
<dbReference type="PRINTS" id="PR00073">
    <property type="entry name" value="COPRGNOXDASE"/>
</dbReference>
<dbReference type="SUPFAM" id="SSF102886">
    <property type="entry name" value="Coproporphyrinogen III oxidase"/>
    <property type="match status" value="1"/>
</dbReference>
<dbReference type="PROSITE" id="PS01021">
    <property type="entry name" value="COPROGEN_OXIDASE"/>
    <property type="match status" value="1"/>
</dbReference>
<name>HEM6_YERPB</name>
<protein>
    <recommendedName>
        <fullName evidence="1">Oxygen-dependent coproporphyrinogen-III oxidase</fullName>
        <shortName evidence="1">CPO</shortName>
        <shortName evidence="1">Coprogen oxidase</shortName>
        <shortName evidence="1">Coproporphyrinogenase</shortName>
        <ecNumber evidence="1">1.3.3.3</ecNumber>
    </recommendedName>
</protein>